<gene>
    <name type="primary">Uchl4</name>
</gene>
<accession>P58321</accession>
<feature type="chain" id="PRO_0000211064" description="Ubiquitin carboxyl-terminal hydrolase isozyme L4">
    <location>
        <begin position="1"/>
        <end position="233"/>
    </location>
</feature>
<feature type="domain" description="UCH catalytic" evidence="3">
    <location>
        <begin position="5"/>
        <end position="232"/>
    </location>
</feature>
<feature type="region of interest" description="Interaction with ubiquitin" evidence="1">
    <location>
        <begin position="8"/>
        <end position="13"/>
    </location>
</feature>
<feature type="region of interest" description="Interaction with ubiquitin" evidence="1">
    <location>
        <begin position="222"/>
        <end position="227"/>
    </location>
</feature>
<feature type="active site" description="Nucleophile" evidence="3">
    <location>
        <position position="95"/>
    </location>
</feature>
<feature type="active site" description="Proton donor" evidence="3">
    <location>
        <position position="172"/>
    </location>
</feature>
<feature type="site" description="Transition state stabilizer" evidence="3">
    <location>
        <position position="89"/>
    </location>
</feature>
<feature type="site" description="Important for enzyme activity" evidence="3">
    <location>
        <position position="187"/>
    </location>
</feature>
<feature type="modified residue" description="Phosphoserine" evidence="2">
    <location>
        <position position="133"/>
    </location>
</feature>
<protein>
    <recommendedName>
        <fullName>Ubiquitin carboxyl-terminal hydrolase isozyme L4</fullName>
        <shortName>UCH-L4</shortName>
        <ecNumber>3.4.19.12</ecNumber>
    </recommendedName>
    <alternativeName>
        <fullName>Ubiquitin thioesterase L4</fullName>
    </alternativeName>
</protein>
<dbReference type="EC" id="3.4.19.12"/>
<dbReference type="EMBL" id="AB035420">
    <property type="protein sequence ID" value="BAB47122.1"/>
    <property type="molecule type" value="mRNA"/>
</dbReference>
<dbReference type="CCDS" id="CCDS23278.1"/>
<dbReference type="PIR" id="JC7689">
    <property type="entry name" value="JC7689"/>
</dbReference>
<dbReference type="RefSeq" id="NP_291085.1">
    <property type="nucleotide sequence ID" value="NM_033607.1"/>
</dbReference>
<dbReference type="SMR" id="P58321"/>
<dbReference type="BioGRID" id="220315">
    <property type="interactions" value="1"/>
</dbReference>
<dbReference type="FunCoup" id="P58321">
    <property type="interactions" value="1006"/>
</dbReference>
<dbReference type="STRING" id="10090.ENSMUSP00000045208"/>
<dbReference type="MEROPS" id="C12.007"/>
<dbReference type="iPTMnet" id="P58321"/>
<dbReference type="PhosphoSitePlus" id="P58321"/>
<dbReference type="SwissPalm" id="P58321"/>
<dbReference type="jPOST" id="P58321"/>
<dbReference type="PaxDb" id="10090-ENSMUSP00000045208"/>
<dbReference type="ProteomicsDB" id="298466"/>
<dbReference type="Pumba" id="P58321"/>
<dbReference type="DNASU" id="93841"/>
<dbReference type="Ensembl" id="ENSMUST00000039011.4">
    <property type="protein sequence ID" value="ENSMUSP00000045208.4"/>
    <property type="gene ID" value="ENSMUSG00000035337.4"/>
</dbReference>
<dbReference type="GeneID" id="93841"/>
<dbReference type="KEGG" id="mmu:93841"/>
<dbReference type="UCSC" id="uc009qbq.1">
    <property type="organism name" value="mouse"/>
</dbReference>
<dbReference type="AGR" id="MGI:1890440"/>
<dbReference type="CTD" id="93841"/>
<dbReference type="MGI" id="MGI:1890440">
    <property type="gene designation" value="Uchl4"/>
</dbReference>
<dbReference type="VEuPathDB" id="HostDB:ENSMUSG00000035337"/>
<dbReference type="eggNOG" id="KOG1415">
    <property type="taxonomic scope" value="Eukaryota"/>
</dbReference>
<dbReference type="GeneTree" id="ENSGT00940000154925"/>
<dbReference type="HOGENOM" id="CLU_054406_1_1_1"/>
<dbReference type="InParanoid" id="P58321"/>
<dbReference type="OMA" id="TCFVQAP"/>
<dbReference type="OrthoDB" id="427186at2759"/>
<dbReference type="PhylomeDB" id="P58321"/>
<dbReference type="TreeFam" id="TF316166"/>
<dbReference type="BioGRID-ORCS" id="93841">
    <property type="hits" value="3 hits in 75 CRISPR screens"/>
</dbReference>
<dbReference type="ChiTaRS" id="Uchl4">
    <property type="organism name" value="mouse"/>
</dbReference>
<dbReference type="PRO" id="PR:P58321"/>
<dbReference type="Proteomes" id="UP000000589">
    <property type="component" value="Chromosome 9"/>
</dbReference>
<dbReference type="RNAct" id="P58321">
    <property type="molecule type" value="protein"/>
</dbReference>
<dbReference type="Bgee" id="ENSMUSG00000035337">
    <property type="expression patterns" value="Expressed in blastoderm cell in morula and 82 other cell types or tissues"/>
</dbReference>
<dbReference type="ExpressionAtlas" id="P58321">
    <property type="expression patterns" value="baseline and differential"/>
</dbReference>
<dbReference type="GO" id="GO:0005737">
    <property type="term" value="C:cytoplasm"/>
    <property type="evidence" value="ECO:0007669"/>
    <property type="project" value="UniProtKB-SubCell"/>
</dbReference>
<dbReference type="GO" id="GO:0004843">
    <property type="term" value="F:cysteine-type deubiquitinase activity"/>
    <property type="evidence" value="ECO:0007669"/>
    <property type="project" value="UniProtKB-EC"/>
</dbReference>
<dbReference type="GO" id="GO:0006511">
    <property type="term" value="P:ubiquitin-dependent protein catabolic process"/>
    <property type="evidence" value="ECO:0007669"/>
    <property type="project" value="InterPro"/>
</dbReference>
<dbReference type="CDD" id="cd09616">
    <property type="entry name" value="Peptidase_C12_UCH_L1_L3"/>
    <property type="match status" value="1"/>
</dbReference>
<dbReference type="FunFam" id="3.40.532.10:FF:000005">
    <property type="entry name" value="Ubiquitin carboxyl-terminal hydrolase"/>
    <property type="match status" value="1"/>
</dbReference>
<dbReference type="Gene3D" id="3.40.532.10">
    <property type="entry name" value="Peptidase C12, ubiquitin carboxyl-terminal hydrolase"/>
    <property type="match status" value="1"/>
</dbReference>
<dbReference type="InterPro" id="IPR038765">
    <property type="entry name" value="Papain-like_cys_pep_sf"/>
</dbReference>
<dbReference type="InterPro" id="IPR001578">
    <property type="entry name" value="Peptidase_C12_UCH"/>
</dbReference>
<dbReference type="InterPro" id="IPR036959">
    <property type="entry name" value="Peptidase_C12_UCH_sf"/>
</dbReference>
<dbReference type="PANTHER" id="PTHR10589">
    <property type="entry name" value="UBIQUITIN CARBOXYL-TERMINAL HYDROLASE"/>
    <property type="match status" value="1"/>
</dbReference>
<dbReference type="PANTHER" id="PTHR10589:SF24">
    <property type="entry name" value="UBIQUITIN CARBOXYL-TERMINAL HYDROLASE ISOZYME L3"/>
    <property type="match status" value="1"/>
</dbReference>
<dbReference type="Pfam" id="PF01088">
    <property type="entry name" value="Peptidase_C12"/>
    <property type="match status" value="1"/>
</dbReference>
<dbReference type="PRINTS" id="PR00707">
    <property type="entry name" value="UBCTHYDRLASE"/>
</dbReference>
<dbReference type="SUPFAM" id="SSF54001">
    <property type="entry name" value="Cysteine proteinases"/>
    <property type="match status" value="1"/>
</dbReference>
<dbReference type="PROSITE" id="PS52048">
    <property type="entry name" value="UCH_DOMAIN"/>
    <property type="match status" value="1"/>
</dbReference>
<organism>
    <name type="scientific">Mus musculus</name>
    <name type="common">Mouse</name>
    <dbReference type="NCBI Taxonomy" id="10090"/>
    <lineage>
        <taxon>Eukaryota</taxon>
        <taxon>Metazoa</taxon>
        <taxon>Chordata</taxon>
        <taxon>Craniata</taxon>
        <taxon>Vertebrata</taxon>
        <taxon>Euteleostomi</taxon>
        <taxon>Mammalia</taxon>
        <taxon>Eutheria</taxon>
        <taxon>Euarchontoglires</taxon>
        <taxon>Glires</taxon>
        <taxon>Rodentia</taxon>
        <taxon>Myomorpha</taxon>
        <taxon>Muroidea</taxon>
        <taxon>Muridae</taxon>
        <taxon>Murinae</taxon>
        <taxon>Mus</taxon>
        <taxon>Mus</taxon>
    </lineage>
</organism>
<sequence>MEGQRWLPLEANPEVTNQFLKQLGLHPNWQFVDVYGMESELLSIIPRPVCAVLLLFPITEKYEVFRTEEEEKIKSQGQDVTSSVYFMKQTISNACGTIGTIGLIHAIANNKDKVHFESGSTLKKFLEESVSMSPEERAKYLENYDAIRVTHETSAHEGQTEAPSIDEKVDLHFIALVHVDGHLYELDGWKPFPINHGKTSDETLLEDVIKVCKKFMERDPDELRFNAIALSAA</sequence>
<proteinExistence type="evidence at transcript level"/>
<keyword id="KW-0963">Cytoplasm</keyword>
<keyword id="KW-0378">Hydrolase</keyword>
<keyword id="KW-0597">Phosphoprotein</keyword>
<keyword id="KW-0645">Protease</keyword>
<keyword id="KW-1185">Reference proteome</keyword>
<keyword id="KW-0788">Thiol protease</keyword>
<keyword id="KW-0833">Ubl conjugation pathway</keyword>
<reference key="1">
    <citation type="journal article" date="2001" name="Biochem. Biophys. Res. Commun.">
        <title>Cloning, expression, and mapping of a mouse gene, Uchl4, highly homologous to human and mouse Uchl3.</title>
        <authorList>
            <person name="Osawa Y."/>
            <person name="Wang Y.-L."/>
            <person name="Osaka H."/>
            <person name="Aoki S."/>
            <person name="Wada K."/>
        </authorList>
    </citation>
    <scope>NUCLEOTIDE SEQUENCE [MRNA]</scope>
    <source>
        <strain>C57BL/6J</strain>
    </source>
</reference>
<evidence type="ECO:0000250" key="1"/>
<evidence type="ECO:0000250" key="2">
    <source>
        <dbReference type="UniProtKB" id="P15374"/>
    </source>
</evidence>
<evidence type="ECO:0000255" key="3">
    <source>
        <dbReference type="PROSITE-ProRule" id="PRU01393"/>
    </source>
</evidence>
<evidence type="ECO:0000305" key="4"/>
<comment type="function">
    <text>Ubiquitin-protein hydrolase is involved both in the processing of ubiquitin precursors and of ubiquitinated proteins. This enzyme is a thiol protease that recognizes and hydrolyzes a peptide bond at the C-terminal glycine of ubiquitin.</text>
</comment>
<comment type="catalytic activity">
    <reaction>
        <text>Thiol-dependent hydrolysis of ester, thioester, amide, peptide and isopeptide bonds formed by the C-terminal Gly of ubiquitin (a 76-residue protein attached to proteins as an intracellular targeting signal).</text>
        <dbReference type="EC" id="3.4.19.12"/>
    </reaction>
</comment>
<comment type="subcellular location">
    <subcellularLocation>
        <location evidence="1">Cytoplasm</location>
    </subcellularLocation>
</comment>
<comment type="tissue specificity">
    <text>Expressed in various tissues at low level.</text>
</comment>
<comment type="similarity">
    <text evidence="4">Belongs to the peptidase C12 family.</text>
</comment>
<name>UCHL4_MOUSE</name>